<keyword id="KW-0238">DNA-binding</keyword>
<keyword id="KW-0539">Nucleus</keyword>
<keyword id="KW-1185">Reference proteome</keyword>
<keyword id="KW-0804">Transcription</keyword>
<keyword id="KW-0805">Transcription regulation</keyword>
<gene>
    <name type="primary">MADS25</name>
    <name type="ordered locus">Os04g0304400</name>
    <name type="ordered locus">LOC_Os04g23910</name>
    <name type="ORF">OSJNBa0079M09.14</name>
</gene>
<evidence type="ECO:0000255" key="1">
    <source>
        <dbReference type="PROSITE-ProRule" id="PRU00251"/>
    </source>
</evidence>
<evidence type="ECO:0000255" key="2">
    <source>
        <dbReference type="PROSITE-ProRule" id="PRU00629"/>
    </source>
</evidence>
<evidence type="ECO:0000256" key="3">
    <source>
        <dbReference type="SAM" id="MobiDB-lite"/>
    </source>
</evidence>
<evidence type="ECO:0000269" key="4">
    <source>
    </source>
</evidence>
<evidence type="ECO:0000305" key="5"/>
<sequence>MGRGKIAIKRIDNTMNRQVTFSKRRGGLMKKARELAILCDADVGLIVFSCTGRLYDFSSSSMKSIIERYQEAGEEHCRLLNPMSEAKFWQREVTTLRQQVQNLHHNNRQLLGEEISNFTVRDLQLLQNQVEMSLHSIRNKKDQLLAEEILKLNEKGSLVQKENSELRKKFNIAHQRNIELHKKLNSGESTSSEQVTRSSKDPGESSTPRDSRVCIDLELSQKEVEDE</sequence>
<dbReference type="EMBL" id="AY177695">
    <property type="protein sequence ID" value="AAO47705.2"/>
    <property type="molecule type" value="mRNA"/>
</dbReference>
<dbReference type="EMBL" id="AL731609">
    <property type="protein sequence ID" value="CAD40494.2"/>
    <property type="molecule type" value="Genomic_DNA"/>
</dbReference>
<dbReference type="EMBL" id="AP008210">
    <property type="protein sequence ID" value="BAF14330.1"/>
    <property type="molecule type" value="Genomic_DNA"/>
</dbReference>
<dbReference type="EMBL" id="AP014960">
    <property type="protein sequence ID" value="BAS88480.1"/>
    <property type="molecule type" value="Genomic_DNA"/>
</dbReference>
<dbReference type="EMBL" id="AK102927">
    <property type="protein sequence ID" value="BAG95786.1"/>
    <property type="molecule type" value="mRNA"/>
</dbReference>
<dbReference type="RefSeq" id="XP_015635120.1">
    <property type="nucleotide sequence ID" value="XM_015779634.1"/>
</dbReference>
<dbReference type="SMR" id="Q84NC5"/>
<dbReference type="FunCoup" id="Q84NC5">
    <property type="interactions" value="31"/>
</dbReference>
<dbReference type="STRING" id="39947.Q84NC5"/>
<dbReference type="PaxDb" id="39947-Q84NC5"/>
<dbReference type="EnsemblPlants" id="Os04t0304400-01">
    <property type="protein sequence ID" value="Os04t0304400-01"/>
    <property type="gene ID" value="Os04g0304400"/>
</dbReference>
<dbReference type="Gramene" id="Os04t0304400-01">
    <property type="protein sequence ID" value="Os04t0304400-01"/>
    <property type="gene ID" value="Os04g0304400"/>
</dbReference>
<dbReference type="KEGG" id="dosa:Os04g0304400"/>
<dbReference type="eggNOG" id="KOG0014">
    <property type="taxonomic scope" value="Eukaryota"/>
</dbReference>
<dbReference type="HOGENOM" id="CLU_053053_2_0_1"/>
<dbReference type="InParanoid" id="Q84NC5"/>
<dbReference type="OMA" id="FWQREVT"/>
<dbReference type="OrthoDB" id="1898716at2759"/>
<dbReference type="Proteomes" id="UP000000763">
    <property type="component" value="Chromosome 4"/>
</dbReference>
<dbReference type="Proteomes" id="UP000059680">
    <property type="component" value="Chromosome 4"/>
</dbReference>
<dbReference type="GO" id="GO:0005634">
    <property type="term" value="C:nucleus"/>
    <property type="evidence" value="ECO:0007669"/>
    <property type="project" value="UniProtKB-SubCell"/>
</dbReference>
<dbReference type="GO" id="GO:0000981">
    <property type="term" value="F:DNA-binding transcription factor activity, RNA polymerase II-specific"/>
    <property type="evidence" value="ECO:0000318"/>
    <property type="project" value="GO_Central"/>
</dbReference>
<dbReference type="GO" id="GO:0046983">
    <property type="term" value="F:protein dimerization activity"/>
    <property type="evidence" value="ECO:0007669"/>
    <property type="project" value="InterPro"/>
</dbReference>
<dbReference type="GO" id="GO:0000978">
    <property type="term" value="F:RNA polymerase II cis-regulatory region sequence-specific DNA binding"/>
    <property type="evidence" value="ECO:0000318"/>
    <property type="project" value="GO_Central"/>
</dbReference>
<dbReference type="GO" id="GO:0045944">
    <property type="term" value="P:positive regulation of transcription by RNA polymerase II"/>
    <property type="evidence" value="ECO:0007669"/>
    <property type="project" value="InterPro"/>
</dbReference>
<dbReference type="GO" id="GO:0006357">
    <property type="term" value="P:regulation of transcription by RNA polymerase II"/>
    <property type="evidence" value="ECO:0000318"/>
    <property type="project" value="GO_Central"/>
</dbReference>
<dbReference type="CDD" id="cd00265">
    <property type="entry name" value="MADS_MEF2_like"/>
    <property type="match status" value="1"/>
</dbReference>
<dbReference type="Gene3D" id="3.40.1810.10">
    <property type="entry name" value="Transcription factor, MADS-box"/>
    <property type="match status" value="1"/>
</dbReference>
<dbReference type="InterPro" id="IPR050142">
    <property type="entry name" value="MADS-box/MEF2_TF"/>
</dbReference>
<dbReference type="InterPro" id="IPR033896">
    <property type="entry name" value="MEF2-like_N"/>
</dbReference>
<dbReference type="InterPro" id="IPR002487">
    <property type="entry name" value="TF_Kbox"/>
</dbReference>
<dbReference type="InterPro" id="IPR002100">
    <property type="entry name" value="TF_MADSbox"/>
</dbReference>
<dbReference type="InterPro" id="IPR036879">
    <property type="entry name" value="TF_MADSbox_sf"/>
</dbReference>
<dbReference type="PANTHER" id="PTHR48019">
    <property type="entry name" value="SERUM RESPONSE FACTOR HOMOLOG"/>
    <property type="match status" value="1"/>
</dbReference>
<dbReference type="Pfam" id="PF01486">
    <property type="entry name" value="K-box"/>
    <property type="match status" value="1"/>
</dbReference>
<dbReference type="Pfam" id="PF00319">
    <property type="entry name" value="SRF-TF"/>
    <property type="match status" value="1"/>
</dbReference>
<dbReference type="PRINTS" id="PR00404">
    <property type="entry name" value="MADSDOMAIN"/>
</dbReference>
<dbReference type="SMART" id="SM00432">
    <property type="entry name" value="MADS"/>
    <property type="match status" value="1"/>
</dbReference>
<dbReference type="SUPFAM" id="SSF55455">
    <property type="entry name" value="SRF-like"/>
    <property type="match status" value="1"/>
</dbReference>
<dbReference type="PROSITE" id="PS51297">
    <property type="entry name" value="K_BOX"/>
    <property type="match status" value="1"/>
</dbReference>
<dbReference type="PROSITE" id="PS00350">
    <property type="entry name" value="MADS_BOX_1"/>
    <property type="match status" value="1"/>
</dbReference>
<dbReference type="PROSITE" id="PS50066">
    <property type="entry name" value="MADS_BOX_2"/>
    <property type="match status" value="1"/>
</dbReference>
<accession>Q84NC5</accession>
<accession>Q0JEA7</accession>
<accession>Q7XVR2</accession>
<organism>
    <name type="scientific">Oryza sativa subsp. japonica</name>
    <name type="common">Rice</name>
    <dbReference type="NCBI Taxonomy" id="39947"/>
    <lineage>
        <taxon>Eukaryota</taxon>
        <taxon>Viridiplantae</taxon>
        <taxon>Streptophyta</taxon>
        <taxon>Embryophyta</taxon>
        <taxon>Tracheophyta</taxon>
        <taxon>Spermatophyta</taxon>
        <taxon>Magnoliopsida</taxon>
        <taxon>Liliopsida</taxon>
        <taxon>Poales</taxon>
        <taxon>Poaceae</taxon>
        <taxon>BOP clade</taxon>
        <taxon>Oryzoideae</taxon>
        <taxon>Oryzeae</taxon>
        <taxon>Oryzinae</taxon>
        <taxon>Oryza</taxon>
        <taxon>Oryza sativa</taxon>
    </lineage>
</organism>
<reference key="1">
    <citation type="journal article" date="2003" name="Plant Cell Physiol.">
        <title>Systematic reverse genetic screening of T-DNA tagged genes in rice for functional genomic analyses: MADS-box genes as a test case.</title>
        <authorList>
            <person name="Lee S."/>
            <person name="Kim J."/>
            <person name="Son J.-S."/>
            <person name="Nam J."/>
            <person name="Jeong D.-H."/>
            <person name="Lee K."/>
            <person name="Jang S."/>
            <person name="Yoo J."/>
            <person name="Lee J."/>
            <person name="Lee D.-Y."/>
            <person name="Kang H.-G."/>
            <person name="An G."/>
        </authorList>
    </citation>
    <scope>NUCLEOTIDE SEQUENCE [MRNA]</scope>
    <scope>TISSUE SPECIFICITY</scope>
    <source>
        <strain>cv. Dongjin</strain>
    </source>
</reference>
<reference key="2">
    <citation type="journal article" date="2002" name="Nature">
        <title>Sequence and analysis of rice chromosome 4.</title>
        <authorList>
            <person name="Feng Q."/>
            <person name="Zhang Y."/>
            <person name="Hao P."/>
            <person name="Wang S."/>
            <person name="Fu G."/>
            <person name="Huang Y."/>
            <person name="Li Y."/>
            <person name="Zhu J."/>
            <person name="Liu Y."/>
            <person name="Hu X."/>
            <person name="Jia P."/>
            <person name="Zhang Y."/>
            <person name="Zhao Q."/>
            <person name="Ying K."/>
            <person name="Yu S."/>
            <person name="Tang Y."/>
            <person name="Weng Q."/>
            <person name="Zhang L."/>
            <person name="Lu Y."/>
            <person name="Mu J."/>
            <person name="Lu Y."/>
            <person name="Zhang L.S."/>
            <person name="Yu Z."/>
            <person name="Fan D."/>
            <person name="Liu X."/>
            <person name="Lu T."/>
            <person name="Li C."/>
            <person name="Wu Y."/>
            <person name="Sun T."/>
            <person name="Lei H."/>
            <person name="Li T."/>
            <person name="Hu H."/>
            <person name="Guan J."/>
            <person name="Wu M."/>
            <person name="Zhang R."/>
            <person name="Zhou B."/>
            <person name="Chen Z."/>
            <person name="Chen L."/>
            <person name="Jin Z."/>
            <person name="Wang R."/>
            <person name="Yin H."/>
            <person name="Cai Z."/>
            <person name="Ren S."/>
            <person name="Lv G."/>
            <person name="Gu W."/>
            <person name="Zhu G."/>
            <person name="Tu Y."/>
            <person name="Jia J."/>
            <person name="Zhang Y."/>
            <person name="Chen J."/>
            <person name="Kang H."/>
            <person name="Chen X."/>
            <person name="Shao C."/>
            <person name="Sun Y."/>
            <person name="Hu Q."/>
            <person name="Zhang X."/>
            <person name="Zhang W."/>
            <person name="Wang L."/>
            <person name="Ding C."/>
            <person name="Sheng H."/>
            <person name="Gu J."/>
            <person name="Chen S."/>
            <person name="Ni L."/>
            <person name="Zhu F."/>
            <person name="Chen W."/>
            <person name="Lan L."/>
            <person name="Lai Y."/>
            <person name="Cheng Z."/>
            <person name="Gu M."/>
            <person name="Jiang J."/>
            <person name="Li J."/>
            <person name="Hong G."/>
            <person name="Xue Y."/>
            <person name="Han B."/>
        </authorList>
    </citation>
    <scope>NUCLEOTIDE SEQUENCE [LARGE SCALE GENOMIC DNA]</scope>
    <source>
        <strain>cv. Nipponbare</strain>
    </source>
</reference>
<reference key="3">
    <citation type="journal article" date="2005" name="Nature">
        <title>The map-based sequence of the rice genome.</title>
        <authorList>
            <consortium name="International rice genome sequencing project (IRGSP)"/>
        </authorList>
    </citation>
    <scope>NUCLEOTIDE SEQUENCE [LARGE SCALE GENOMIC DNA]</scope>
    <source>
        <strain>cv. Nipponbare</strain>
    </source>
</reference>
<reference key="4">
    <citation type="journal article" date="2008" name="Nucleic Acids Res.">
        <title>The rice annotation project database (RAP-DB): 2008 update.</title>
        <authorList>
            <consortium name="The rice annotation project (RAP)"/>
        </authorList>
    </citation>
    <scope>GENOME REANNOTATION</scope>
    <source>
        <strain>cv. Nipponbare</strain>
    </source>
</reference>
<reference key="5">
    <citation type="journal article" date="2013" name="Rice">
        <title>Improvement of the Oryza sativa Nipponbare reference genome using next generation sequence and optical map data.</title>
        <authorList>
            <person name="Kawahara Y."/>
            <person name="de la Bastide M."/>
            <person name="Hamilton J.P."/>
            <person name="Kanamori H."/>
            <person name="McCombie W.R."/>
            <person name="Ouyang S."/>
            <person name="Schwartz D.C."/>
            <person name="Tanaka T."/>
            <person name="Wu J."/>
            <person name="Zhou S."/>
            <person name="Childs K.L."/>
            <person name="Davidson R.M."/>
            <person name="Lin H."/>
            <person name="Quesada-Ocampo L."/>
            <person name="Vaillancourt B."/>
            <person name="Sakai H."/>
            <person name="Lee S.S."/>
            <person name="Kim J."/>
            <person name="Numa H."/>
            <person name="Itoh T."/>
            <person name="Buell C.R."/>
            <person name="Matsumoto T."/>
        </authorList>
    </citation>
    <scope>GENOME REANNOTATION</scope>
    <source>
        <strain>cv. Nipponbare</strain>
    </source>
</reference>
<reference key="6">
    <citation type="journal article" date="2003" name="Science">
        <title>Collection, mapping, and annotation of over 28,000 cDNA clones from japonica rice.</title>
        <authorList>
            <consortium name="The rice full-length cDNA consortium"/>
        </authorList>
    </citation>
    <scope>NUCLEOTIDE SEQUENCE [LARGE SCALE MRNA]</scope>
    <source>
        <strain>cv. Nipponbare</strain>
    </source>
</reference>
<protein>
    <recommendedName>
        <fullName>MADS-box transcription factor 25</fullName>
    </recommendedName>
    <alternativeName>
        <fullName>OsMADS25</fullName>
    </alternativeName>
</protein>
<name>MAD25_ORYSJ</name>
<feature type="chain" id="PRO_0000229906" description="MADS-box transcription factor 25">
    <location>
        <begin position="1"/>
        <end position="227"/>
    </location>
</feature>
<feature type="domain" description="MADS-box" evidence="1">
    <location>
        <begin position="1"/>
        <end position="61"/>
    </location>
</feature>
<feature type="domain" description="K-box" evidence="2">
    <location>
        <begin position="86"/>
        <end position="176"/>
    </location>
</feature>
<feature type="region of interest" description="Disordered" evidence="3">
    <location>
        <begin position="183"/>
        <end position="227"/>
    </location>
</feature>
<feature type="compositionally biased region" description="Polar residues" evidence="3">
    <location>
        <begin position="186"/>
        <end position="197"/>
    </location>
</feature>
<feature type="compositionally biased region" description="Basic and acidic residues" evidence="3">
    <location>
        <begin position="198"/>
        <end position="227"/>
    </location>
</feature>
<proteinExistence type="evidence at transcript level"/>
<comment type="function">
    <text>Probable transcription factor.</text>
</comment>
<comment type="subcellular location">
    <subcellularLocation>
        <location evidence="5">Nucleus</location>
    </subcellularLocation>
</comment>
<comment type="tissue specificity">
    <text evidence="4">Expressed in seedling roots.</text>
</comment>